<organism>
    <name type="scientific">Biomphalaria glabrata</name>
    <name type="common">Bloodfluke planorb</name>
    <name type="synonym">Freshwater snail</name>
    <dbReference type="NCBI Taxonomy" id="6526"/>
    <lineage>
        <taxon>Eukaryota</taxon>
        <taxon>Metazoa</taxon>
        <taxon>Spiralia</taxon>
        <taxon>Lophotrochozoa</taxon>
        <taxon>Mollusca</taxon>
        <taxon>Gastropoda</taxon>
        <taxon>Heterobranchia</taxon>
        <taxon>Euthyneura</taxon>
        <taxon>Panpulmonata</taxon>
        <taxon>Hygrophila</taxon>
        <taxon>Lymnaeoidea</taxon>
        <taxon>Planorbidae</taxon>
        <taxon>Biomphalaria</taxon>
    </lineage>
</organism>
<accession>P80745</accession>
<name>LE06_BIOGL</name>
<gene>
    <name type="primary">BG06</name>
</gene>
<dbReference type="Proteomes" id="UP000076420">
    <property type="component" value="Unassembled WGS sequence"/>
</dbReference>
<dbReference type="Proteomes" id="UP001165740">
    <property type="component" value="Unplaced"/>
</dbReference>
<dbReference type="GO" id="GO:0005576">
    <property type="term" value="C:extracellular region"/>
    <property type="evidence" value="ECO:0007669"/>
    <property type="project" value="UniProtKB-SubCell"/>
</dbReference>
<dbReference type="GO" id="GO:0030246">
    <property type="term" value="F:carbohydrate binding"/>
    <property type="evidence" value="ECO:0007669"/>
    <property type="project" value="UniProtKB-KW"/>
</dbReference>
<keyword id="KW-0903">Direct protein sequencing</keyword>
<keyword id="KW-0430">Lectin</keyword>
<keyword id="KW-1185">Reference proteome</keyword>
<keyword id="KW-0964">Secreted</keyword>
<sequence>FFTTFDKDNDDQQNDN</sequence>
<protein>
    <recommendedName>
        <fullName>Hemolymph 65 kDa lectin BG06</fullName>
    </recommendedName>
</protein>
<proteinExistence type="evidence at protein level"/>
<reference key="1">
    <citation type="journal article" date="1997" name="Proc. Natl. Acad. Sci. U.S.A.">
        <title>A family of fibrinogen-related proteins that precipitates parasite-derived molecules is produced by an invertebrate after infection.</title>
        <authorList>
            <person name="Adema C.M."/>
            <person name="Hertel L.A."/>
            <person name="Miller R.D."/>
            <person name="Loker E.S."/>
        </authorList>
    </citation>
    <scope>PROTEIN SEQUENCE</scope>
    <source>
        <strain>M-line</strain>
        <tissue>Hemolymph</tissue>
    </source>
</reference>
<comment type="function">
    <text>Binds and precipitates antigens of the parasite Echinostoma paraensei.</text>
</comment>
<comment type="subcellular location">
    <subcellularLocation>
        <location>Secreted</location>
    </subcellularLocation>
</comment>
<comment type="tissue specificity">
    <text>Hemolymph.</text>
</comment>
<comment type="induction">
    <text>By infection.</text>
</comment>
<feature type="chain" id="PRO_0000084397" description="Hemolymph 65 kDa lectin BG06">
    <location>
        <begin position="1" status="less than"/>
        <end position="16" status="greater than"/>
    </location>
</feature>
<feature type="non-terminal residue">
    <location>
        <position position="1"/>
    </location>
</feature>
<feature type="non-terminal residue">
    <location>
        <position position="16"/>
    </location>
</feature>